<feature type="chain" id="PRO_0000450242" description="Calcium-independent phospholipase A2-gamma">
    <location>
        <begin position="1"/>
        <end position="776"/>
    </location>
</feature>
<feature type="transmembrane region" description="Helical" evidence="4">
    <location>
        <begin position="469"/>
        <end position="489"/>
    </location>
</feature>
<feature type="domain" description="PNPLA" evidence="5">
    <location>
        <begin position="439"/>
        <end position="634"/>
    </location>
</feature>
<feature type="region of interest" description="Disordered" evidence="6">
    <location>
        <begin position="226"/>
        <end position="274"/>
    </location>
</feature>
<feature type="region of interest" description="Disordered" evidence="6">
    <location>
        <begin position="306"/>
        <end position="331"/>
    </location>
</feature>
<feature type="short sequence motif" description="GXGXXG" evidence="5">
    <location>
        <begin position="443"/>
        <end position="448"/>
    </location>
</feature>
<feature type="short sequence motif" description="GXSXG" evidence="5">
    <location>
        <begin position="475"/>
        <end position="479"/>
    </location>
</feature>
<feature type="short sequence motif" description="DGA/G" evidence="5">
    <location>
        <begin position="621"/>
        <end position="623"/>
    </location>
</feature>
<feature type="compositionally biased region" description="Basic and acidic residues" evidence="6">
    <location>
        <begin position="226"/>
        <end position="238"/>
    </location>
</feature>
<feature type="compositionally biased region" description="Basic and acidic residues" evidence="6">
    <location>
        <begin position="307"/>
        <end position="331"/>
    </location>
</feature>
<feature type="active site" description="Nucleophile" evidence="5">
    <location>
        <position position="477"/>
    </location>
</feature>
<feature type="active site" description="Proton acceptor" evidence="5">
    <location>
        <position position="621"/>
    </location>
</feature>
<feature type="modified residue" description="N6-succinyllysine" evidence="2">
    <location>
        <position position="730"/>
    </location>
</feature>
<comment type="function">
    <text evidence="2 3">Calcium-independent and membrane-bound phospholipase, that catalyzes the esterolytic cleavage of fatty acids from glycerophospholipids to yield free fatty acids and lysophospholipids, hence regulating membrane physical properties and the release of lipid second messengers and growth factors. Hydrolyzes phosphatidylethanolamine, phosphatidylcholine and probably phosphatidylinositol with a possible preference for the former. Has also a broad substrate specificity in terms of fatty acid moieties, hydrolyzing saturated and mono-unsaturated fatty acids at nearly equal rates from either the sn-1 or sn-2 position in diacyl phosphatidylcholine. However, has a weak activity toward polyunsaturated fatty acids at the sn-2 position, and thereby favors the production of 2-arachidonoyl lysophosphatidylcholine, a key branch point metabolite in eicosanoid signaling. On the other hand, can produce arachidonic acid from the sn-1 position of diacyl phospholipid and from the sn-2 position of arachidonate-containing plasmalogen substrates. Therefore, plays an important role in the mobilization of arachidonic acid in response to cellular stimuli and the generation of lipid second messengers. Can also hydrolyze lysophosphatidylcholine. In the mitochondrial compartment, catalyzes the hydrolysis and release of oxidized aliphatic chains from cardiolipin and integrates mitochondrial bioenergetics and signaling. It is essential for maintaining efficient bioenergetic mitochondrial function through tailoring mitochondrial membrane lipid metabolism and composition.</text>
</comment>
<comment type="catalytic activity">
    <reaction evidence="3">
        <text>a 1,2-diacyl-sn-glycero-3-phosphocholine + H2O = a 1-acyl-sn-glycero-3-phosphocholine + a fatty acid + H(+)</text>
        <dbReference type="Rhea" id="RHEA:15801"/>
        <dbReference type="ChEBI" id="CHEBI:15377"/>
        <dbReference type="ChEBI" id="CHEBI:15378"/>
        <dbReference type="ChEBI" id="CHEBI:28868"/>
        <dbReference type="ChEBI" id="CHEBI:57643"/>
        <dbReference type="ChEBI" id="CHEBI:58168"/>
    </reaction>
    <physiologicalReaction direction="left-to-right" evidence="3">
        <dbReference type="Rhea" id="RHEA:15802"/>
    </physiologicalReaction>
</comment>
<comment type="catalytic activity">
    <reaction evidence="3">
        <text>a 1,2-diacyl-sn-glycero-3-phosphocholine + H2O = a 2-acyl-sn-glycero-3-phosphocholine + a fatty acid + H(+)</text>
        <dbReference type="Rhea" id="RHEA:18689"/>
        <dbReference type="ChEBI" id="CHEBI:15377"/>
        <dbReference type="ChEBI" id="CHEBI:15378"/>
        <dbReference type="ChEBI" id="CHEBI:28868"/>
        <dbReference type="ChEBI" id="CHEBI:57643"/>
        <dbReference type="ChEBI" id="CHEBI:57875"/>
    </reaction>
    <physiologicalReaction direction="left-to-right" evidence="3">
        <dbReference type="Rhea" id="RHEA:18690"/>
    </physiologicalReaction>
</comment>
<comment type="catalytic activity">
    <reaction evidence="3">
        <text>a 1,2-diacyl-sn-glycero-3-phosphoethanolamine + H2O = a 1-acyl-sn-glycero-3-phosphoethanolamine + a fatty acid + H(+)</text>
        <dbReference type="Rhea" id="RHEA:44604"/>
        <dbReference type="ChEBI" id="CHEBI:15377"/>
        <dbReference type="ChEBI" id="CHEBI:15378"/>
        <dbReference type="ChEBI" id="CHEBI:28868"/>
        <dbReference type="ChEBI" id="CHEBI:64381"/>
        <dbReference type="ChEBI" id="CHEBI:64612"/>
    </reaction>
    <physiologicalReaction direction="left-to-right" evidence="3">
        <dbReference type="Rhea" id="RHEA:44605"/>
    </physiologicalReaction>
</comment>
<comment type="catalytic activity">
    <reaction evidence="3">
        <text>a 1-O-(1Z-alkenyl)-2-acyl-sn-glycero-3-phosphocholine + H2O = a 1-O-(1Z-alkenyl)-sn-glycero-3-phosphocholine + a fatty acid + H(+)</text>
        <dbReference type="Rhea" id="RHEA:44068"/>
        <dbReference type="ChEBI" id="CHEBI:15377"/>
        <dbReference type="ChEBI" id="CHEBI:15378"/>
        <dbReference type="ChEBI" id="CHEBI:28868"/>
        <dbReference type="ChEBI" id="CHEBI:77286"/>
        <dbReference type="ChEBI" id="CHEBI:77287"/>
    </reaction>
    <physiologicalReaction direction="left-to-right" evidence="3">
        <dbReference type="Rhea" id="RHEA:44069"/>
    </physiologicalReaction>
</comment>
<comment type="catalytic activity">
    <reaction evidence="3">
        <text>a 1-acyl-sn-glycero-3-phosphocholine + H2O = sn-glycerol 3-phosphocholine + a fatty acid + H(+)</text>
        <dbReference type="Rhea" id="RHEA:15177"/>
        <dbReference type="ChEBI" id="CHEBI:15377"/>
        <dbReference type="ChEBI" id="CHEBI:15378"/>
        <dbReference type="ChEBI" id="CHEBI:16870"/>
        <dbReference type="ChEBI" id="CHEBI:28868"/>
        <dbReference type="ChEBI" id="CHEBI:58168"/>
        <dbReference type="EC" id="3.1.1.5"/>
    </reaction>
    <physiologicalReaction direction="left-to-right" evidence="3">
        <dbReference type="Rhea" id="RHEA:15178"/>
    </physiologicalReaction>
</comment>
<comment type="catalytic activity">
    <reaction evidence="3">
        <text>1-acyl-2-(9Z,12Z)-octadecadienoyl-sn-glycero-3-phosphocholine + H2O = a 1-acyl-sn-glycero-3-phosphocholine + (9Z,12Z)-octadecadienoate + H(+)</text>
        <dbReference type="Rhea" id="RHEA:40643"/>
        <dbReference type="ChEBI" id="CHEBI:15377"/>
        <dbReference type="ChEBI" id="CHEBI:15378"/>
        <dbReference type="ChEBI" id="CHEBI:30245"/>
        <dbReference type="ChEBI" id="CHEBI:58168"/>
        <dbReference type="ChEBI" id="CHEBI:60000"/>
    </reaction>
    <physiologicalReaction direction="left-to-right" evidence="3">
        <dbReference type="Rhea" id="RHEA:40644"/>
    </physiologicalReaction>
</comment>
<comment type="catalytic activity">
    <reaction evidence="3">
        <text>1-acyl-2-(5Z,8Z,11Z,14Z-eicosatetraenoyl)-sn-glycero-3-phosphocholine + H2O = a 1-acyl-sn-glycero-3-phosphocholine + (5Z,8Z,11Z,14Z)-eicosatetraenoate + H(+)</text>
        <dbReference type="Rhea" id="RHEA:40651"/>
        <dbReference type="ChEBI" id="CHEBI:15377"/>
        <dbReference type="ChEBI" id="CHEBI:15378"/>
        <dbReference type="ChEBI" id="CHEBI:32395"/>
        <dbReference type="ChEBI" id="CHEBI:58168"/>
        <dbReference type="ChEBI" id="CHEBI:75063"/>
    </reaction>
    <physiologicalReaction direction="left-to-right" evidence="3">
        <dbReference type="Rhea" id="RHEA:40652"/>
    </physiologicalReaction>
</comment>
<comment type="catalytic activity">
    <reaction evidence="3">
        <text>1-hexadecanoyl-2-(5Z,8Z,11Z,14Z-eicosatetraenoyl)-sn-glycero-3-phosphocholine + H2O = 1-hexadecanoyl-sn-glycero-3-phosphocholine + (5Z,8Z,11Z,14Z)-eicosatetraenoate + H(+)</text>
        <dbReference type="Rhea" id="RHEA:40427"/>
        <dbReference type="ChEBI" id="CHEBI:15377"/>
        <dbReference type="ChEBI" id="CHEBI:15378"/>
        <dbReference type="ChEBI" id="CHEBI:32395"/>
        <dbReference type="ChEBI" id="CHEBI:72998"/>
        <dbReference type="ChEBI" id="CHEBI:73003"/>
    </reaction>
    <physiologicalReaction direction="left-to-right" evidence="3">
        <dbReference type="Rhea" id="RHEA:40428"/>
    </physiologicalReaction>
</comment>
<comment type="catalytic activity">
    <reaction evidence="3">
        <text>1-octadecanoyl-2-(9Z-octadecenoyl)-sn-glycero-3-phosphocholine + H2O = 1-octadecanoyl-sn-glycero-3-phosphocholine + (9Z)-octadecenoate + H(+)</text>
        <dbReference type="Rhea" id="RHEA:40819"/>
        <dbReference type="ChEBI" id="CHEBI:15377"/>
        <dbReference type="ChEBI" id="CHEBI:15378"/>
        <dbReference type="ChEBI" id="CHEBI:30823"/>
        <dbReference type="ChEBI" id="CHEBI:73858"/>
        <dbReference type="ChEBI" id="CHEBI:75034"/>
    </reaction>
    <physiologicalReaction direction="left-to-right" evidence="3">
        <dbReference type="Rhea" id="RHEA:40820"/>
    </physiologicalReaction>
</comment>
<comment type="catalytic activity">
    <reaction evidence="3">
        <text>1-hexadecanoyl-2-(9Z-octadecenoyl)-sn-glycero-3-phosphocholine + H2O = 1-hexadecanoyl-sn-glycero-3-phosphocholine + (9Z)-octadecenoate + H(+)</text>
        <dbReference type="Rhea" id="RHEA:38779"/>
        <dbReference type="ChEBI" id="CHEBI:15377"/>
        <dbReference type="ChEBI" id="CHEBI:15378"/>
        <dbReference type="ChEBI" id="CHEBI:30823"/>
        <dbReference type="ChEBI" id="CHEBI:72998"/>
        <dbReference type="ChEBI" id="CHEBI:73001"/>
    </reaction>
    <physiologicalReaction direction="left-to-right" evidence="3">
        <dbReference type="Rhea" id="RHEA:38780"/>
    </physiologicalReaction>
</comment>
<comment type="catalytic activity">
    <reaction evidence="3">
        <text>1-hexadecanoyl-2-(9Z,12Z-octadecadienoyl)-sn-glycero-3-phosphocholine + H2O = (9Z,12Z)-octadecadienoate + 1-hexadecanoyl-sn-glycero-3-phosphocholine + H(+)</text>
        <dbReference type="Rhea" id="RHEA:40811"/>
        <dbReference type="ChEBI" id="CHEBI:15377"/>
        <dbReference type="ChEBI" id="CHEBI:15378"/>
        <dbReference type="ChEBI" id="CHEBI:30245"/>
        <dbReference type="ChEBI" id="CHEBI:72998"/>
        <dbReference type="ChEBI" id="CHEBI:73002"/>
    </reaction>
    <physiologicalReaction direction="left-to-right" evidence="3">
        <dbReference type="Rhea" id="RHEA:40812"/>
    </physiologicalReaction>
</comment>
<comment type="catalytic activity">
    <reaction evidence="3">
        <text>1-acyl-2-(9Z,12Z)-octadecadienoyl-sn-glycero-3-phosphoethanolamine + H2O = a 1-acyl-sn-glycero-3-phosphoethanolamine + (9Z,12Z)-octadecadienoate + H(+)</text>
        <dbReference type="Rhea" id="RHEA:40639"/>
        <dbReference type="ChEBI" id="CHEBI:15377"/>
        <dbReference type="ChEBI" id="CHEBI:15378"/>
        <dbReference type="ChEBI" id="CHEBI:30245"/>
        <dbReference type="ChEBI" id="CHEBI:64381"/>
        <dbReference type="ChEBI" id="CHEBI:75069"/>
    </reaction>
    <physiologicalReaction direction="left-to-right" evidence="3">
        <dbReference type="Rhea" id="RHEA:40640"/>
    </physiologicalReaction>
</comment>
<comment type="catalytic activity">
    <reaction evidence="3">
        <text>1-acyl-2-(5Z,8Z,11Z,14Z)-eicosatetraenoyl-sn-glycero-3-phosphoethanolamine + H2O = a 1-acyl-sn-glycero-3-phosphoethanolamine + (5Z,8Z,11Z,14Z)-eicosatetraenoate + H(+)</text>
        <dbReference type="Rhea" id="RHEA:40647"/>
        <dbReference type="ChEBI" id="CHEBI:15377"/>
        <dbReference type="ChEBI" id="CHEBI:15378"/>
        <dbReference type="ChEBI" id="CHEBI:32395"/>
        <dbReference type="ChEBI" id="CHEBI:64381"/>
        <dbReference type="ChEBI" id="CHEBI:75067"/>
    </reaction>
    <physiologicalReaction direction="left-to-right" evidence="3">
        <dbReference type="Rhea" id="RHEA:40648"/>
    </physiologicalReaction>
</comment>
<comment type="catalytic activity">
    <reaction evidence="3">
        <text>1-hexadecanoyl-2-(5Z,8Z,11Z,14Z-eicosatetraenoyl)-sn-glycero-3-phosphoethanolamine + H2O = 1-hexadecanoyl-sn-glycero-3-phosphoethanolamine + (5Z,8Z,11Z,14Z)-eicosatetraenoate + H(+)</text>
        <dbReference type="Rhea" id="RHEA:40431"/>
        <dbReference type="ChEBI" id="CHEBI:15377"/>
        <dbReference type="ChEBI" id="CHEBI:15378"/>
        <dbReference type="ChEBI" id="CHEBI:32395"/>
        <dbReference type="ChEBI" id="CHEBI:73004"/>
        <dbReference type="ChEBI" id="CHEBI:73009"/>
    </reaction>
    <physiologicalReaction direction="left-to-right" evidence="3">
        <dbReference type="Rhea" id="RHEA:40432"/>
    </physiologicalReaction>
</comment>
<comment type="catalytic activity">
    <reaction evidence="3">
        <text>1-hexadecanoyl-2-(5Z,8Z,11Z,14Z-eicosatetraenoyl)-sn-glycero-3-phosphocholine + H2O = 2-(5Z,8Z,11Z,14Z)-eicosatetraenoyl-sn-glycero-3-phosphocholine + hexadecanoate + H(+)</text>
        <dbReference type="Rhea" id="RHEA:40571"/>
        <dbReference type="ChEBI" id="CHEBI:7896"/>
        <dbReference type="ChEBI" id="CHEBI:15377"/>
        <dbReference type="ChEBI" id="CHEBI:15378"/>
        <dbReference type="ChEBI" id="CHEBI:73003"/>
        <dbReference type="ChEBI" id="CHEBI:76079"/>
    </reaction>
    <physiologicalReaction direction="left-to-right" evidence="3">
        <dbReference type="Rhea" id="RHEA:40572"/>
    </physiologicalReaction>
</comment>
<comment type="catalytic activity">
    <reaction evidence="3">
        <text>1-octadecanoyl-2-(9Z-octadecenoyl)-sn-glycero-3-phosphocholine + H2O = 2-(9Z-octadecenoyl)-sn-glycero-3-phosphocholine + octadecanoate + H(+)</text>
        <dbReference type="Rhea" id="RHEA:40823"/>
        <dbReference type="ChEBI" id="CHEBI:15377"/>
        <dbReference type="ChEBI" id="CHEBI:15378"/>
        <dbReference type="ChEBI" id="CHEBI:25629"/>
        <dbReference type="ChEBI" id="CHEBI:75034"/>
        <dbReference type="ChEBI" id="CHEBI:76071"/>
    </reaction>
    <physiologicalReaction direction="left-to-right" evidence="3">
        <dbReference type="Rhea" id="RHEA:40824"/>
    </physiologicalReaction>
</comment>
<comment type="catalytic activity">
    <reaction evidence="3">
        <text>1-hexadecanoyl-2-(4Z,7Z,10Z,13Z,16Z,19Z-docosahexaenoyl)-sn-glycero-3-phosphocholine + H2O = 2-(4Z,7Z,10Z,13Z,16Z,19Z-docosahexaenoyl)-sn-glycero-3-phosphocholine + hexadecanoate + H(+)</text>
        <dbReference type="Rhea" id="RHEA:41063"/>
        <dbReference type="ChEBI" id="CHEBI:7896"/>
        <dbReference type="ChEBI" id="CHEBI:15377"/>
        <dbReference type="ChEBI" id="CHEBI:15378"/>
        <dbReference type="ChEBI" id="CHEBI:74963"/>
        <dbReference type="ChEBI" id="CHEBI:76085"/>
    </reaction>
    <physiologicalReaction direction="left-to-right" evidence="3">
        <dbReference type="Rhea" id="RHEA:41064"/>
    </physiologicalReaction>
</comment>
<comment type="catalytic activity">
    <reaction evidence="3">
        <text>1-O-(1Z)-hexadecenyl-2 (5Z,8Z,11Z,14Z)-eicosatetraenoyl-sn-glycero-3-phosphocholine + H2O = 1-(1Z-hexadecenyl)-sn-glycero-3-phosphocholine + (5Z,8Z,11Z,14Z)-eicosatetraenoate + H(+)</text>
        <dbReference type="Rhea" id="RHEA:40579"/>
        <dbReference type="ChEBI" id="CHEBI:15377"/>
        <dbReference type="ChEBI" id="CHEBI:15378"/>
        <dbReference type="ChEBI" id="CHEBI:32395"/>
        <dbReference type="ChEBI" id="CHEBI:73850"/>
        <dbReference type="ChEBI" id="CHEBI:77292"/>
    </reaction>
    <physiologicalReaction direction="left-to-right" evidence="3">
        <dbReference type="Rhea" id="RHEA:40580"/>
    </physiologicalReaction>
</comment>
<comment type="catalytic activity">
    <reaction evidence="3">
        <text>1-O-(1Z-hexadecenyl)-2-(9Z-octadecenoyl)-sn-glycero-3-phosphocholine + H2O = 1-(1Z-hexadecenyl)-sn-glycero-3-phosphocholine + (9Z)-octadecenoate + H(+)</text>
        <dbReference type="Rhea" id="RHEA:67156"/>
        <dbReference type="ChEBI" id="CHEBI:15377"/>
        <dbReference type="ChEBI" id="CHEBI:15378"/>
        <dbReference type="ChEBI" id="CHEBI:30823"/>
        <dbReference type="ChEBI" id="CHEBI:73850"/>
        <dbReference type="ChEBI" id="CHEBI:86232"/>
    </reaction>
    <physiologicalReaction direction="left-to-right" evidence="3">
        <dbReference type="Rhea" id="RHEA:67157"/>
    </physiologicalReaction>
</comment>
<comment type="catalytic activity">
    <reaction evidence="3">
        <text>1-hexadecanoyl-sn-glycero-3-phosphocholine + H2O = sn-glycerol 3-phosphocholine + hexadecanoate + H(+)</text>
        <dbReference type="Rhea" id="RHEA:40435"/>
        <dbReference type="ChEBI" id="CHEBI:7896"/>
        <dbReference type="ChEBI" id="CHEBI:15377"/>
        <dbReference type="ChEBI" id="CHEBI:15378"/>
        <dbReference type="ChEBI" id="CHEBI:16870"/>
        <dbReference type="ChEBI" id="CHEBI:72998"/>
    </reaction>
    <physiologicalReaction direction="left-to-right" evidence="3">
        <dbReference type="Rhea" id="RHEA:40436"/>
    </physiologicalReaction>
</comment>
<comment type="catalytic activity">
    <reaction evidence="3">
        <text>1',3'-bis-[1,2-di-(9Z,12Z-octadecadienoyl)-sn-glycero-3-phospho]-glycerol + H2O = 1'-[1,2-di-(9Z,12Z-octadecadienoyl)-sn-glycero-3-phospho]-3'-[1-(9Z,12Z-octadecadienoyl)-sn-glycero-3-phospho]-glycerol + (9Z,12Z)-octadecadienoate + H(+)</text>
        <dbReference type="Rhea" id="RHEA:52812"/>
        <dbReference type="ChEBI" id="CHEBI:15377"/>
        <dbReference type="ChEBI" id="CHEBI:15378"/>
        <dbReference type="ChEBI" id="CHEBI:30245"/>
        <dbReference type="ChEBI" id="CHEBI:83580"/>
        <dbReference type="ChEBI" id="CHEBI:83581"/>
    </reaction>
    <physiologicalReaction direction="left-to-right" evidence="3">
        <dbReference type="Rhea" id="RHEA:52813"/>
    </physiologicalReaction>
</comment>
<comment type="catalytic activity">
    <reaction evidence="3">
        <text>1'-[1-acyl-2-(9-hydroxy-(10E,12Z)-octadecadienoyl)-sn-glycero-3-phospho]-3'-[1,2-diacyl-sn-glycero-3-phospho]-glycerol + H2O = 9-hydroxy-(10E,12Z)-octadecadienoate + 1'-[1,2-diacyl-sn-glycero-3-phospho],3'-[1-acyl-sn-glycero-3-phospho]-glycerol + H(+)</text>
        <dbReference type="Rhea" id="RHEA:67272"/>
        <dbReference type="ChEBI" id="CHEBI:15377"/>
        <dbReference type="ChEBI" id="CHEBI:15378"/>
        <dbReference type="ChEBI" id="CHEBI:64743"/>
        <dbReference type="ChEBI" id="CHEBI:133820"/>
        <dbReference type="ChEBI" id="CHEBI:167908"/>
    </reaction>
    <physiologicalReaction direction="left-to-right" evidence="3">
        <dbReference type="Rhea" id="RHEA:67273"/>
    </physiologicalReaction>
</comment>
<comment type="activity regulation">
    <text evidence="3">Calcium-independent phospholipase.</text>
</comment>
<comment type="pathway">
    <text evidence="3">Phospholipid metabolism.</text>
</comment>
<comment type="subcellular location">
    <subcellularLocation>
        <location evidence="1">Endoplasmic reticulum membrane</location>
        <topology evidence="3">Single-pass membrane protein</topology>
    </subcellularLocation>
    <subcellularLocation>
        <location evidence="1">Microsome membrane</location>
        <topology evidence="3">Single-pass membrane protein</topology>
    </subcellularLocation>
    <subcellularLocation>
        <location evidence="3">Mitochondrion membrane</location>
        <topology evidence="3">Single-pass membrane protein</topology>
    </subcellularLocation>
    <subcellularLocation>
        <location evidence="8">Peroxisome membrane</location>
        <topology evidence="7">Single-pass membrane protein</topology>
    </subcellularLocation>
</comment>
<accession>D3ZRC4</accession>
<evidence type="ECO:0000250" key="1">
    <source>
        <dbReference type="UniProtKB" id="Q5XTS1"/>
    </source>
</evidence>
<evidence type="ECO:0000250" key="2">
    <source>
        <dbReference type="UniProtKB" id="Q8K1N1"/>
    </source>
</evidence>
<evidence type="ECO:0000250" key="3">
    <source>
        <dbReference type="UniProtKB" id="Q9NP80"/>
    </source>
</evidence>
<evidence type="ECO:0000255" key="4"/>
<evidence type="ECO:0000255" key="5">
    <source>
        <dbReference type="PROSITE-ProRule" id="PRU01161"/>
    </source>
</evidence>
<evidence type="ECO:0000256" key="6">
    <source>
        <dbReference type="SAM" id="MobiDB-lite"/>
    </source>
</evidence>
<evidence type="ECO:0000305" key="7"/>
<evidence type="ECO:0000305" key="8">
    <source>
    </source>
</evidence>
<evidence type="ECO:0000312" key="9">
    <source>
        <dbReference type="RGD" id="1311444"/>
    </source>
</evidence>
<protein>
    <recommendedName>
        <fullName evidence="7">Calcium-independent phospholipase A2-gamma</fullName>
        <ecNumber evidence="3">3.1.1.-</ecNumber>
        <ecNumber evidence="3">3.1.1.5</ecNumber>
    </recommendedName>
    <alternativeName>
        <fullName>Intracellular membrane-associated calcium-independent phospholipase A2 gamma</fullName>
        <shortName>iPLA2-gamma</shortName>
    </alternativeName>
    <alternativeName>
        <fullName>Patatin-like phospholipase domain-containing protein 8</fullName>
    </alternativeName>
</protein>
<proteinExistence type="inferred from homology"/>
<organism>
    <name type="scientific">Rattus norvegicus</name>
    <name type="common">Rat</name>
    <dbReference type="NCBI Taxonomy" id="10116"/>
    <lineage>
        <taxon>Eukaryota</taxon>
        <taxon>Metazoa</taxon>
        <taxon>Chordata</taxon>
        <taxon>Craniata</taxon>
        <taxon>Vertebrata</taxon>
        <taxon>Euteleostomi</taxon>
        <taxon>Mammalia</taxon>
        <taxon>Eutheria</taxon>
        <taxon>Euarchontoglires</taxon>
        <taxon>Glires</taxon>
        <taxon>Rodentia</taxon>
        <taxon>Myomorpha</taxon>
        <taxon>Muroidea</taxon>
        <taxon>Muridae</taxon>
        <taxon>Murinae</taxon>
        <taxon>Rattus</taxon>
    </lineage>
</organism>
<dbReference type="EC" id="3.1.1.-" evidence="3"/>
<dbReference type="EC" id="3.1.1.5" evidence="3"/>
<dbReference type="EMBL" id="AC133400">
    <property type="status" value="NOT_ANNOTATED_CDS"/>
    <property type="molecule type" value="Genomic_DNA"/>
</dbReference>
<dbReference type="EMBL" id="CH473947">
    <property type="protein sequence ID" value="EDM03350.1"/>
    <property type="molecule type" value="Genomic_DNA"/>
</dbReference>
<dbReference type="RefSeq" id="NP_001101490.2">
    <property type="nucleotide sequence ID" value="NM_001108020.2"/>
</dbReference>
<dbReference type="RefSeq" id="XP_003750198.1">
    <property type="nucleotide sequence ID" value="XM_003750150.4"/>
</dbReference>
<dbReference type="RefSeq" id="XP_003754218.1">
    <property type="nucleotide sequence ID" value="XM_003754170.4"/>
</dbReference>
<dbReference type="RefSeq" id="XP_063117971.1">
    <property type="nucleotide sequence ID" value="XM_063261901.1"/>
</dbReference>
<dbReference type="SMR" id="D3ZRC4"/>
<dbReference type="FunCoup" id="D3ZRC4">
    <property type="interactions" value="2226"/>
</dbReference>
<dbReference type="IntAct" id="D3ZRC4">
    <property type="interactions" value="1"/>
</dbReference>
<dbReference type="STRING" id="10116.ENSRNOP00000049214"/>
<dbReference type="iPTMnet" id="D3ZRC4"/>
<dbReference type="PhosphoSitePlus" id="D3ZRC4"/>
<dbReference type="jPOST" id="D3ZRC4"/>
<dbReference type="PaxDb" id="10116-ENSRNOP00000049214"/>
<dbReference type="PeptideAtlas" id="D3ZRC4"/>
<dbReference type="Ensembl" id="ENSRNOT00000047296.7">
    <property type="protein sequence ID" value="ENSRNOP00000049214.3"/>
    <property type="gene ID" value="ENSRNOG00000039091.6"/>
</dbReference>
<dbReference type="GeneID" id="314075"/>
<dbReference type="AGR" id="RGD:1311444"/>
<dbReference type="RGD" id="1311444">
    <property type="gene designation" value="Pnpla8"/>
</dbReference>
<dbReference type="eggNOG" id="KOG4231">
    <property type="taxonomic scope" value="Eukaryota"/>
</dbReference>
<dbReference type="GeneTree" id="ENSGT00940000154738"/>
<dbReference type="HOGENOM" id="CLU_000288_144_7_1"/>
<dbReference type="InParanoid" id="D3ZRC4"/>
<dbReference type="OMA" id="HMSRIKN"/>
<dbReference type="PhylomeDB" id="D3ZRC4"/>
<dbReference type="TreeFam" id="TF319230"/>
<dbReference type="Reactome" id="R-RNO-1482788">
    <property type="pathway name" value="Acyl chain remodelling of PC"/>
</dbReference>
<dbReference type="Reactome" id="R-RNO-1482839">
    <property type="pathway name" value="Acyl chain remodelling of PE"/>
</dbReference>
<dbReference type="PRO" id="PR:D3ZRC4"/>
<dbReference type="Proteomes" id="UP000002494">
    <property type="component" value="Chromosome 6"/>
</dbReference>
<dbReference type="Proteomes" id="UP000234681">
    <property type="component" value="Chromosome 6"/>
</dbReference>
<dbReference type="Bgee" id="ENSRNOG00000039091">
    <property type="expression patterns" value="Expressed in quadriceps femoris and 19 other cell types or tissues"/>
</dbReference>
<dbReference type="ExpressionAtlas" id="D3ZRC4">
    <property type="expression patterns" value="baseline and differential"/>
</dbReference>
<dbReference type="GO" id="GO:0005789">
    <property type="term" value="C:endoplasmic reticulum membrane"/>
    <property type="evidence" value="ECO:0007669"/>
    <property type="project" value="UniProtKB-SubCell"/>
</dbReference>
<dbReference type="GO" id="GO:0016020">
    <property type="term" value="C:membrane"/>
    <property type="evidence" value="ECO:0000250"/>
    <property type="project" value="UniProtKB"/>
</dbReference>
<dbReference type="GO" id="GO:0031966">
    <property type="term" value="C:mitochondrial membrane"/>
    <property type="evidence" value="ECO:0007669"/>
    <property type="project" value="UniProtKB-SubCell"/>
</dbReference>
<dbReference type="GO" id="GO:0005739">
    <property type="term" value="C:mitochondrion"/>
    <property type="evidence" value="ECO:0000250"/>
    <property type="project" value="UniProtKB"/>
</dbReference>
<dbReference type="GO" id="GO:0005778">
    <property type="term" value="C:peroxisomal membrane"/>
    <property type="evidence" value="ECO:0000266"/>
    <property type="project" value="RGD"/>
</dbReference>
<dbReference type="GO" id="GO:0005777">
    <property type="term" value="C:peroxisome"/>
    <property type="evidence" value="ECO:0000250"/>
    <property type="project" value="UniProtKB"/>
</dbReference>
<dbReference type="GO" id="GO:0047499">
    <property type="term" value="F:calcium-independent phospholipase A2 activity"/>
    <property type="evidence" value="ECO:0000250"/>
    <property type="project" value="UniProtKB"/>
</dbReference>
<dbReference type="GO" id="GO:0004622">
    <property type="term" value="F:lysophospholipase activity"/>
    <property type="evidence" value="ECO:0007669"/>
    <property type="project" value="UniProtKB-EC"/>
</dbReference>
<dbReference type="GO" id="GO:0008970">
    <property type="term" value="F:phospholipase A1 activity"/>
    <property type="evidence" value="ECO:0007669"/>
    <property type="project" value="RHEA"/>
</dbReference>
<dbReference type="GO" id="GO:0019369">
    <property type="term" value="P:arachidonate metabolic process"/>
    <property type="evidence" value="ECO:0000250"/>
    <property type="project" value="UniProtKB"/>
</dbReference>
<dbReference type="GO" id="GO:0050482">
    <property type="term" value="P:arachidonate secretion"/>
    <property type="evidence" value="ECO:0000266"/>
    <property type="project" value="RGD"/>
</dbReference>
<dbReference type="GO" id="GO:0032048">
    <property type="term" value="P:cardiolipin metabolic process"/>
    <property type="evidence" value="ECO:0000250"/>
    <property type="project" value="UniProtKB"/>
</dbReference>
<dbReference type="GO" id="GO:0006631">
    <property type="term" value="P:fatty acid metabolic process"/>
    <property type="evidence" value="ECO:0000266"/>
    <property type="project" value="RGD"/>
</dbReference>
<dbReference type="GO" id="GO:0035556">
    <property type="term" value="P:intracellular signal transduction"/>
    <property type="evidence" value="ECO:0000266"/>
    <property type="project" value="RGD"/>
</dbReference>
<dbReference type="GO" id="GO:0043651">
    <property type="term" value="P:linoleic acid metabolic process"/>
    <property type="evidence" value="ECO:0000266"/>
    <property type="project" value="RGD"/>
</dbReference>
<dbReference type="GO" id="GO:0055088">
    <property type="term" value="P:lipid homeostasis"/>
    <property type="evidence" value="ECO:0000250"/>
    <property type="project" value="UniProtKB"/>
</dbReference>
<dbReference type="GO" id="GO:0034638">
    <property type="term" value="P:phosphatidylcholine catabolic process"/>
    <property type="evidence" value="ECO:0000266"/>
    <property type="project" value="RGD"/>
</dbReference>
<dbReference type="GO" id="GO:0046338">
    <property type="term" value="P:phosphatidylethanolamine catabolic process"/>
    <property type="evidence" value="ECO:0000266"/>
    <property type="project" value="RGD"/>
</dbReference>
<dbReference type="GO" id="GO:0001516">
    <property type="term" value="P:prostaglandin biosynthetic process"/>
    <property type="evidence" value="ECO:0000266"/>
    <property type="project" value="RGD"/>
</dbReference>
<dbReference type="GO" id="GO:1900407">
    <property type="term" value="P:regulation of cellular response to oxidative stress"/>
    <property type="evidence" value="ECO:0000266"/>
    <property type="project" value="RGD"/>
</dbReference>
<dbReference type="GO" id="GO:0070328">
    <property type="term" value="P:triglyceride homeostasis"/>
    <property type="evidence" value="ECO:0000250"/>
    <property type="project" value="UniProtKB"/>
</dbReference>
<dbReference type="CDD" id="cd07211">
    <property type="entry name" value="Pat_PNPLA8"/>
    <property type="match status" value="1"/>
</dbReference>
<dbReference type="Gene3D" id="3.40.1090.10">
    <property type="entry name" value="Cytosolic phospholipase A2 catalytic domain"/>
    <property type="match status" value="1"/>
</dbReference>
<dbReference type="InterPro" id="IPR016035">
    <property type="entry name" value="Acyl_Trfase/lysoPLipase"/>
</dbReference>
<dbReference type="InterPro" id="IPR045217">
    <property type="entry name" value="PNPLA8-like"/>
</dbReference>
<dbReference type="InterPro" id="IPR002641">
    <property type="entry name" value="PNPLA_dom"/>
</dbReference>
<dbReference type="PANTHER" id="PTHR24185">
    <property type="entry name" value="CALCIUM-INDEPENDENT PHOSPHOLIPASE A2-GAMMA"/>
    <property type="match status" value="1"/>
</dbReference>
<dbReference type="PANTHER" id="PTHR24185:SF1">
    <property type="entry name" value="CALCIUM-INDEPENDENT PHOSPHOLIPASE A2-GAMMA"/>
    <property type="match status" value="1"/>
</dbReference>
<dbReference type="Pfam" id="PF01734">
    <property type="entry name" value="Patatin"/>
    <property type="match status" value="1"/>
</dbReference>
<dbReference type="SUPFAM" id="SSF52151">
    <property type="entry name" value="FabD/lysophospholipase-like"/>
    <property type="match status" value="1"/>
</dbReference>
<dbReference type="PROSITE" id="PS51635">
    <property type="entry name" value="PNPLA"/>
    <property type="match status" value="1"/>
</dbReference>
<sequence>MSINLTLDIYIYFLNNARSFCGKQRSKQLNFLCSKQYWRMNHVNVHREFHTSKKSCKWNRSEAHCSKHWHSSSNHGVHIGIVKLSTSAPKGLTKVSIHMSRIKSTLNSVSKAIFGSQNEMVSRLAQFKPSSRIFRKVSDRGWLKHKNVKQAIESLKNYSDKSAEKNSFAEQKSYFADKEEGSDKHSLYHYAYRITTRFGESFYFLANHINSYFKNKEKMSQIKEDRQLQDKPCLEESKSISPSPDILTDRPDSGPPLNVEDKLSSSTQLPEALPVSTKQSIANFLSRPTEGVQALVGGYIGGLVPKLKSDPKSQPEEEEEPSKTDEPICKDKKAEEKKRVLLQREKIIARVSIDNRTRALVQALRRTTDPKLCITRVEELTFHLLEFPEGKGVAVKEKIIPYLLRLRQIKDETLQAAVREILALIGYVDPVKGRGIRILAIDGGGTRGVVALQTLRKLVELTQKPIHQLFDYICGVSTGAILAFMLGLFHMPLDECEELYRKLGSDVFTQNVIVGTVKMSWSHAFYDSHTWEKILKDKVGSALMIETARDPLCPKVAAVSTIVNRGQTPKAFVFRNYGHFPGTNSHYLGGCQYKMWQAIRASSAAPGYFAEYALGNDLHQDGGLLLNNPSALALHECKCIWPDTPLECIVSLGTGRYESDVRNTTTYTSLKTKLSNVISSATDTEEVHIMLDGLLPADTYFRFNPVICENIPLDESRNEKLDQLQLEGMKYLERNDEKMKKLAKILSREKTTLQKISDWIKLKSDMYEGLPFFSKL</sequence>
<name>PLPL8_RAT</name>
<keyword id="KW-0256">Endoplasmic reticulum</keyword>
<keyword id="KW-0378">Hydrolase</keyword>
<keyword id="KW-0442">Lipid degradation</keyword>
<keyword id="KW-0443">Lipid metabolism</keyword>
<keyword id="KW-0472">Membrane</keyword>
<keyword id="KW-0492">Microsome</keyword>
<keyword id="KW-0496">Mitochondrion</keyword>
<keyword id="KW-0576">Peroxisome</keyword>
<keyword id="KW-1185">Reference proteome</keyword>
<keyword id="KW-0812">Transmembrane</keyword>
<keyword id="KW-1133">Transmembrane helix</keyword>
<gene>
    <name evidence="9" type="primary">Pnpla8</name>
</gene>
<reference key="1">
    <citation type="journal article" date="2004" name="Nature">
        <title>Genome sequence of the Brown Norway rat yields insights into mammalian evolution.</title>
        <authorList>
            <person name="Gibbs R.A."/>
            <person name="Weinstock G.M."/>
            <person name="Metzker M.L."/>
            <person name="Muzny D.M."/>
            <person name="Sodergren E.J."/>
            <person name="Scherer S."/>
            <person name="Scott G."/>
            <person name="Steffen D."/>
            <person name="Worley K.C."/>
            <person name="Burch P.E."/>
            <person name="Okwuonu G."/>
            <person name="Hines S."/>
            <person name="Lewis L."/>
            <person name="Deramo C."/>
            <person name="Delgado O."/>
            <person name="Dugan-Rocha S."/>
            <person name="Miner G."/>
            <person name="Morgan M."/>
            <person name="Hawes A."/>
            <person name="Gill R."/>
            <person name="Holt R.A."/>
            <person name="Adams M.D."/>
            <person name="Amanatides P.G."/>
            <person name="Baden-Tillson H."/>
            <person name="Barnstead M."/>
            <person name="Chin S."/>
            <person name="Evans C.A."/>
            <person name="Ferriera S."/>
            <person name="Fosler C."/>
            <person name="Glodek A."/>
            <person name="Gu Z."/>
            <person name="Jennings D."/>
            <person name="Kraft C.L."/>
            <person name="Nguyen T."/>
            <person name="Pfannkoch C.M."/>
            <person name="Sitter C."/>
            <person name="Sutton G.G."/>
            <person name="Venter J.C."/>
            <person name="Woodage T."/>
            <person name="Smith D."/>
            <person name="Lee H.-M."/>
            <person name="Gustafson E."/>
            <person name="Cahill P."/>
            <person name="Kana A."/>
            <person name="Doucette-Stamm L."/>
            <person name="Weinstock K."/>
            <person name="Fechtel K."/>
            <person name="Weiss R.B."/>
            <person name="Dunn D.M."/>
            <person name="Green E.D."/>
            <person name="Blakesley R.W."/>
            <person name="Bouffard G.G."/>
            <person name="De Jong P.J."/>
            <person name="Osoegawa K."/>
            <person name="Zhu B."/>
            <person name="Marra M."/>
            <person name="Schein J."/>
            <person name="Bosdet I."/>
            <person name="Fjell C."/>
            <person name="Jones S."/>
            <person name="Krzywinski M."/>
            <person name="Mathewson C."/>
            <person name="Siddiqui A."/>
            <person name="Wye N."/>
            <person name="McPherson J."/>
            <person name="Zhao S."/>
            <person name="Fraser C.M."/>
            <person name="Shetty J."/>
            <person name="Shatsman S."/>
            <person name="Geer K."/>
            <person name="Chen Y."/>
            <person name="Abramzon S."/>
            <person name="Nierman W.C."/>
            <person name="Havlak P.H."/>
            <person name="Chen R."/>
            <person name="Durbin K.J."/>
            <person name="Egan A."/>
            <person name="Ren Y."/>
            <person name="Song X.-Z."/>
            <person name="Li B."/>
            <person name="Liu Y."/>
            <person name="Qin X."/>
            <person name="Cawley S."/>
            <person name="Cooney A.J."/>
            <person name="D'Souza L.M."/>
            <person name="Martin K."/>
            <person name="Wu J.Q."/>
            <person name="Gonzalez-Garay M.L."/>
            <person name="Jackson A.R."/>
            <person name="Kalafus K.J."/>
            <person name="McLeod M.P."/>
            <person name="Milosavljevic A."/>
            <person name="Virk D."/>
            <person name="Volkov A."/>
            <person name="Wheeler D.A."/>
            <person name="Zhang Z."/>
            <person name="Bailey J.A."/>
            <person name="Eichler E.E."/>
            <person name="Tuzun E."/>
            <person name="Birney E."/>
            <person name="Mongin E."/>
            <person name="Ureta-Vidal A."/>
            <person name="Woodwark C."/>
            <person name="Zdobnov E."/>
            <person name="Bork P."/>
            <person name="Suyama M."/>
            <person name="Torrents D."/>
            <person name="Alexandersson M."/>
            <person name="Trask B.J."/>
            <person name="Young J.M."/>
            <person name="Huang H."/>
            <person name="Wang H."/>
            <person name="Xing H."/>
            <person name="Daniels S."/>
            <person name="Gietzen D."/>
            <person name="Schmidt J."/>
            <person name="Stevens K."/>
            <person name="Vitt U."/>
            <person name="Wingrove J."/>
            <person name="Camara F."/>
            <person name="Mar Alba M."/>
            <person name="Abril J.F."/>
            <person name="Guigo R."/>
            <person name="Smit A."/>
            <person name="Dubchak I."/>
            <person name="Rubin E.M."/>
            <person name="Couronne O."/>
            <person name="Poliakov A."/>
            <person name="Huebner N."/>
            <person name="Ganten D."/>
            <person name="Goesele C."/>
            <person name="Hummel O."/>
            <person name="Kreitler T."/>
            <person name="Lee Y.-A."/>
            <person name="Monti J."/>
            <person name="Schulz H."/>
            <person name="Zimdahl H."/>
            <person name="Himmelbauer H."/>
            <person name="Lehrach H."/>
            <person name="Jacob H.J."/>
            <person name="Bromberg S."/>
            <person name="Gullings-Handley J."/>
            <person name="Jensen-Seaman M.I."/>
            <person name="Kwitek A.E."/>
            <person name="Lazar J."/>
            <person name="Pasko D."/>
            <person name="Tonellato P.J."/>
            <person name="Twigger S."/>
            <person name="Ponting C.P."/>
            <person name="Duarte J.M."/>
            <person name="Rice S."/>
            <person name="Goodstadt L."/>
            <person name="Beatson S.A."/>
            <person name="Emes R.D."/>
            <person name="Winter E.E."/>
            <person name="Webber C."/>
            <person name="Brandt P."/>
            <person name="Nyakatura G."/>
            <person name="Adetobi M."/>
            <person name="Chiaromonte F."/>
            <person name="Elnitski L."/>
            <person name="Eswara P."/>
            <person name="Hardison R.C."/>
            <person name="Hou M."/>
            <person name="Kolbe D."/>
            <person name="Makova K."/>
            <person name="Miller W."/>
            <person name="Nekrutenko A."/>
            <person name="Riemer C."/>
            <person name="Schwartz S."/>
            <person name="Taylor J."/>
            <person name="Yang S."/>
            <person name="Zhang Y."/>
            <person name="Lindpaintner K."/>
            <person name="Andrews T.D."/>
            <person name="Caccamo M."/>
            <person name="Clamp M."/>
            <person name="Clarke L."/>
            <person name="Curwen V."/>
            <person name="Durbin R.M."/>
            <person name="Eyras E."/>
            <person name="Searle S.M."/>
            <person name="Cooper G.M."/>
            <person name="Batzoglou S."/>
            <person name="Brudno M."/>
            <person name="Sidow A."/>
            <person name="Stone E.A."/>
            <person name="Payseur B.A."/>
            <person name="Bourque G."/>
            <person name="Lopez-Otin C."/>
            <person name="Puente X.S."/>
            <person name="Chakrabarti K."/>
            <person name="Chatterji S."/>
            <person name="Dewey C."/>
            <person name="Pachter L."/>
            <person name="Bray N."/>
            <person name="Yap V.B."/>
            <person name="Caspi A."/>
            <person name="Tesler G."/>
            <person name="Pevzner P.A."/>
            <person name="Haussler D."/>
            <person name="Roskin K.M."/>
            <person name="Baertsch R."/>
            <person name="Clawson H."/>
            <person name="Furey T.S."/>
            <person name="Hinrichs A.S."/>
            <person name="Karolchik D."/>
            <person name="Kent W.J."/>
            <person name="Rosenbloom K.R."/>
            <person name="Trumbower H."/>
            <person name="Weirauch M."/>
            <person name="Cooper D.N."/>
            <person name="Stenson P.D."/>
            <person name="Ma B."/>
            <person name="Brent M."/>
            <person name="Arumugam M."/>
            <person name="Shteynberg D."/>
            <person name="Copley R.R."/>
            <person name="Taylor M.S."/>
            <person name="Riethman H."/>
            <person name="Mudunuri U."/>
            <person name="Peterson J."/>
            <person name="Guyer M."/>
            <person name="Felsenfeld A."/>
            <person name="Old S."/>
            <person name="Mockrin S."/>
            <person name="Collins F.S."/>
        </authorList>
    </citation>
    <scope>NUCLEOTIDE SEQUENCE [LARGE SCALE GENOMIC DNA]</scope>
    <source>
        <strain>Brown Norway</strain>
    </source>
</reference>
<reference key="2">
    <citation type="submission" date="2005-09" db="EMBL/GenBank/DDBJ databases">
        <authorList>
            <person name="Mural R.J."/>
            <person name="Li P.W."/>
            <person name="Adams M.D."/>
            <person name="Amanatides P.G."/>
            <person name="Baden-Tillson H."/>
            <person name="Barnstead M."/>
            <person name="Chin S.H."/>
            <person name="Dew I."/>
            <person name="Evans C.A."/>
            <person name="Ferriera S."/>
            <person name="Flanigan M."/>
            <person name="Fosler C."/>
            <person name="Glodek A."/>
            <person name="Gu Z."/>
            <person name="Holt R.A."/>
            <person name="Jennings D."/>
            <person name="Kraft C.L."/>
            <person name="Lu F."/>
            <person name="Nguyen T."/>
            <person name="Nusskern D.R."/>
            <person name="Pfannkoch C.M."/>
            <person name="Sitter C."/>
            <person name="Sutton G.G."/>
            <person name="Venter J.C."/>
            <person name="Wang Z."/>
            <person name="Woodage T."/>
            <person name="Zheng X.H."/>
            <person name="Zhong F."/>
        </authorList>
    </citation>
    <scope>NUCLEOTIDE SEQUENCE [LARGE SCALE GENOMIC DNA]</scope>
    <source>
        <strain>Brown Norway</strain>
    </source>
</reference>
<reference key="3">
    <citation type="journal article" date="2005" name="J. Biol. Chem.">
        <title>The highly selective production of 2-arachidonoyl lysophosphatidylcholine catalyzed by purified calcium-independent phospholipase A2gamma: identification of a novel enzymatic mediator for the generation of a key branch point intermediate in eicosanoid signaling.</title>
        <authorList>
            <person name="Yan W."/>
            <person name="Jenkins C.M."/>
            <person name="Han X."/>
            <person name="Mancuso D.J."/>
            <person name="Sims H.F."/>
            <person name="Yang K."/>
            <person name="Gross R.W."/>
        </authorList>
    </citation>
    <scope>SUBCELLULAR LOCATION</scope>
</reference>